<keyword id="KW-0027">Amidation</keyword>
<keyword id="KW-0903">Direct protein sequencing</keyword>
<keyword id="KW-0527">Neuropeptide</keyword>
<keyword id="KW-0964">Secreted</keyword>
<protein>
    <recommendedName>
        <fullName>Periviscerokinin-2</fullName>
    </recommendedName>
    <alternativeName>
        <fullName>Lom-PVK-2</fullName>
    </alternativeName>
</protein>
<sequence>GLLAFPRV</sequence>
<dbReference type="GO" id="GO:0005576">
    <property type="term" value="C:extracellular region"/>
    <property type="evidence" value="ECO:0007669"/>
    <property type="project" value="UniProtKB-SubCell"/>
</dbReference>
<dbReference type="GO" id="GO:0007218">
    <property type="term" value="P:neuropeptide signaling pathway"/>
    <property type="evidence" value="ECO:0007669"/>
    <property type="project" value="UniProtKB-KW"/>
</dbReference>
<dbReference type="InterPro" id="IPR013231">
    <property type="entry name" value="Periviscerokinin"/>
</dbReference>
<dbReference type="Pfam" id="PF08259">
    <property type="entry name" value="Periviscerokin"/>
    <property type="match status" value="1"/>
</dbReference>
<organism>
    <name type="scientific">Locusta migratoria</name>
    <name type="common">Migratory locust</name>
    <dbReference type="NCBI Taxonomy" id="7004"/>
    <lineage>
        <taxon>Eukaryota</taxon>
        <taxon>Metazoa</taxon>
        <taxon>Ecdysozoa</taxon>
        <taxon>Arthropoda</taxon>
        <taxon>Hexapoda</taxon>
        <taxon>Insecta</taxon>
        <taxon>Pterygota</taxon>
        <taxon>Neoptera</taxon>
        <taxon>Polyneoptera</taxon>
        <taxon>Orthoptera</taxon>
        <taxon>Caelifera</taxon>
        <taxon>Acrididea</taxon>
        <taxon>Acridomorpha</taxon>
        <taxon>Acridoidea</taxon>
        <taxon>Acrididae</taxon>
        <taxon>Oedipodinae</taxon>
        <taxon>Locusta</taxon>
    </lineage>
</organism>
<reference evidence="4" key="1">
    <citation type="journal article" date="2003" name="Biochem. Biophys. Res. Commun.">
        <title>Mass spectrometric analysis of the perisympathetic organs in locusts: identification of novel periviscerokinins.</title>
        <authorList>
            <person name="Clynen E."/>
            <person name="Huybrechts J."/>
            <person name="De Loof A."/>
            <person name="Schoofs L."/>
        </authorList>
    </citation>
    <scope>PROTEIN SEQUENCE</scope>
    <scope>TISSUE SPECIFICITY</scope>
    <scope>MASS SPECTROMETRY</scope>
    <scope>AMIDATION AT VAL-8</scope>
    <source>
        <tissue evidence="3">Abdominal perisympathetic organs</tissue>
    </source>
</reference>
<comment type="function">
    <text evidence="1">Mediates visceral muscle contractile activity (myotropic activity).</text>
</comment>
<comment type="subcellular location">
    <subcellularLocation>
        <location evidence="4">Secreted</location>
    </subcellularLocation>
</comment>
<comment type="tissue specificity">
    <text evidence="3">Found in the abdominal ganglia and perisympathetic organs. Not detected in the thoracic ganglia, subesophageal ganglion, corpora cardiaca, corpora allata, hypocerebral ganglion or frontal ganglion.</text>
</comment>
<comment type="mass spectrometry"/>
<comment type="similarity">
    <text evidence="2">Belongs to the periviscerokinin family.</text>
</comment>
<proteinExistence type="evidence at protein level"/>
<feature type="peptide" id="PRO_0000343529" description="Periviscerokinin-2" evidence="3">
    <location>
        <begin position="1"/>
        <end position="8"/>
    </location>
</feature>
<feature type="modified residue" description="Valine amide" evidence="3">
    <location>
        <position position="8"/>
    </location>
</feature>
<name>PVK2_LOCMI</name>
<accession>P85865</accession>
<evidence type="ECO:0000250" key="1">
    <source>
        <dbReference type="UniProtKB" id="P84352"/>
    </source>
</evidence>
<evidence type="ECO:0000255" key="2"/>
<evidence type="ECO:0000269" key="3">
    <source>
    </source>
</evidence>
<evidence type="ECO:0000305" key="4"/>